<evidence type="ECO:0000255" key="1">
    <source>
        <dbReference type="HAMAP-Rule" id="MF_00385"/>
    </source>
</evidence>
<evidence type="ECO:0000305" key="2"/>
<accession>Q31XD6</accession>
<proteinExistence type="inferred from homology"/>
<sequence>MVTIRLARHGAKKRPFYQVVVADSRNARNGRFIERVGFFNPIASEKEEGTRLDLDRIAHWVGQGATISDRVAALIKEVNKAA</sequence>
<protein>
    <recommendedName>
        <fullName evidence="1">Small ribosomal subunit protein bS16</fullName>
    </recommendedName>
    <alternativeName>
        <fullName evidence="2">30S ribosomal protein S16</fullName>
    </alternativeName>
</protein>
<name>RS16_SHIBS</name>
<dbReference type="EMBL" id="CP000036">
    <property type="protein sequence ID" value="ABB67272.1"/>
    <property type="molecule type" value="Genomic_DNA"/>
</dbReference>
<dbReference type="RefSeq" id="WP_000256450.1">
    <property type="nucleotide sequence ID" value="NC_007613.1"/>
</dbReference>
<dbReference type="SMR" id="Q31XD6"/>
<dbReference type="GeneID" id="93774459"/>
<dbReference type="KEGG" id="sbo:SBO_2745"/>
<dbReference type="HOGENOM" id="CLU_100590_5_1_6"/>
<dbReference type="Proteomes" id="UP000007067">
    <property type="component" value="Chromosome"/>
</dbReference>
<dbReference type="GO" id="GO:0005737">
    <property type="term" value="C:cytoplasm"/>
    <property type="evidence" value="ECO:0007669"/>
    <property type="project" value="UniProtKB-ARBA"/>
</dbReference>
<dbReference type="GO" id="GO:0015935">
    <property type="term" value="C:small ribosomal subunit"/>
    <property type="evidence" value="ECO:0007669"/>
    <property type="project" value="TreeGrafter"/>
</dbReference>
<dbReference type="GO" id="GO:0003735">
    <property type="term" value="F:structural constituent of ribosome"/>
    <property type="evidence" value="ECO:0007669"/>
    <property type="project" value="InterPro"/>
</dbReference>
<dbReference type="GO" id="GO:0006412">
    <property type="term" value="P:translation"/>
    <property type="evidence" value="ECO:0007669"/>
    <property type="project" value="UniProtKB-UniRule"/>
</dbReference>
<dbReference type="FunFam" id="3.30.1320.10:FF:000001">
    <property type="entry name" value="30S ribosomal protein S16"/>
    <property type="match status" value="1"/>
</dbReference>
<dbReference type="Gene3D" id="3.30.1320.10">
    <property type="match status" value="1"/>
</dbReference>
<dbReference type="HAMAP" id="MF_00385">
    <property type="entry name" value="Ribosomal_bS16"/>
    <property type="match status" value="1"/>
</dbReference>
<dbReference type="InterPro" id="IPR000307">
    <property type="entry name" value="Ribosomal_bS16"/>
</dbReference>
<dbReference type="InterPro" id="IPR020592">
    <property type="entry name" value="Ribosomal_bS16_CS"/>
</dbReference>
<dbReference type="InterPro" id="IPR023803">
    <property type="entry name" value="Ribosomal_bS16_dom_sf"/>
</dbReference>
<dbReference type="NCBIfam" id="TIGR00002">
    <property type="entry name" value="S16"/>
    <property type="match status" value="1"/>
</dbReference>
<dbReference type="PANTHER" id="PTHR12919">
    <property type="entry name" value="30S RIBOSOMAL PROTEIN S16"/>
    <property type="match status" value="1"/>
</dbReference>
<dbReference type="PANTHER" id="PTHR12919:SF20">
    <property type="entry name" value="SMALL RIBOSOMAL SUBUNIT PROTEIN BS16M"/>
    <property type="match status" value="1"/>
</dbReference>
<dbReference type="Pfam" id="PF00886">
    <property type="entry name" value="Ribosomal_S16"/>
    <property type="match status" value="1"/>
</dbReference>
<dbReference type="SUPFAM" id="SSF54565">
    <property type="entry name" value="Ribosomal protein S16"/>
    <property type="match status" value="1"/>
</dbReference>
<dbReference type="PROSITE" id="PS00732">
    <property type="entry name" value="RIBOSOMAL_S16"/>
    <property type="match status" value="1"/>
</dbReference>
<organism>
    <name type="scientific">Shigella boydii serotype 4 (strain Sb227)</name>
    <dbReference type="NCBI Taxonomy" id="300268"/>
    <lineage>
        <taxon>Bacteria</taxon>
        <taxon>Pseudomonadati</taxon>
        <taxon>Pseudomonadota</taxon>
        <taxon>Gammaproteobacteria</taxon>
        <taxon>Enterobacterales</taxon>
        <taxon>Enterobacteriaceae</taxon>
        <taxon>Shigella</taxon>
    </lineage>
</organism>
<feature type="chain" id="PRO_0000243869" description="Small ribosomal subunit protein bS16">
    <location>
        <begin position="1"/>
        <end position="82"/>
    </location>
</feature>
<gene>
    <name evidence="1" type="primary">rpsP</name>
    <name type="ordered locus">SBO_2745</name>
</gene>
<comment type="similarity">
    <text evidence="1">Belongs to the bacterial ribosomal protein bS16 family.</text>
</comment>
<keyword id="KW-0687">Ribonucleoprotein</keyword>
<keyword id="KW-0689">Ribosomal protein</keyword>
<reference key="1">
    <citation type="journal article" date="2005" name="Nucleic Acids Res.">
        <title>Genome dynamics and diversity of Shigella species, the etiologic agents of bacillary dysentery.</title>
        <authorList>
            <person name="Yang F."/>
            <person name="Yang J."/>
            <person name="Zhang X."/>
            <person name="Chen L."/>
            <person name="Jiang Y."/>
            <person name="Yan Y."/>
            <person name="Tang X."/>
            <person name="Wang J."/>
            <person name="Xiong Z."/>
            <person name="Dong J."/>
            <person name="Xue Y."/>
            <person name="Zhu Y."/>
            <person name="Xu X."/>
            <person name="Sun L."/>
            <person name="Chen S."/>
            <person name="Nie H."/>
            <person name="Peng J."/>
            <person name="Xu J."/>
            <person name="Wang Y."/>
            <person name="Yuan Z."/>
            <person name="Wen Y."/>
            <person name="Yao Z."/>
            <person name="Shen Y."/>
            <person name="Qiang B."/>
            <person name="Hou Y."/>
            <person name="Yu J."/>
            <person name="Jin Q."/>
        </authorList>
    </citation>
    <scope>NUCLEOTIDE SEQUENCE [LARGE SCALE GENOMIC DNA]</scope>
    <source>
        <strain>Sb227</strain>
    </source>
</reference>